<evidence type="ECO:0000250" key="1">
    <source>
        <dbReference type="UniProtKB" id="O35795"/>
    </source>
</evidence>
<evidence type="ECO:0000250" key="2">
    <source>
        <dbReference type="UniProtKB" id="P49961"/>
    </source>
</evidence>
<evidence type="ECO:0000250" key="3">
    <source>
        <dbReference type="UniProtKB" id="P97687"/>
    </source>
</evidence>
<evidence type="ECO:0000255" key="4"/>
<evidence type="ECO:0000269" key="5">
    <source>
    </source>
</evidence>
<evidence type="ECO:0000269" key="6">
    <source>
    </source>
</evidence>
<evidence type="ECO:0000269" key="7">
    <source>
    </source>
</evidence>
<evidence type="ECO:0000303" key="8">
    <source>
    </source>
</evidence>
<evidence type="ECO:0000305" key="9"/>
<evidence type="ECO:0000305" key="10">
    <source>
    </source>
</evidence>
<protein>
    <recommendedName>
        <fullName evidence="2">Ectonucleoside triphosphate diphosphohydrolase 1</fullName>
        <ecNumber evidence="5">3.6.1.5</ecNumber>
    </recommendedName>
    <alternativeName>
        <fullName evidence="2">ATP diphosphohydrolase</fullName>
        <shortName evidence="2">ATP-DPH</shortName>
        <shortName evidence="2">ATPDase</shortName>
    </alternativeName>
    <alternativeName>
        <fullName evidence="2">Ecto-ATP diphosphohydrolase 1</fullName>
        <shortName>Ecto-ATPDase 1</shortName>
        <shortName>Ecto-ATPase 1</shortName>
    </alternativeName>
    <alternativeName>
        <fullName evidence="2">Ecto-apyrase</fullName>
    </alternativeName>
    <alternativeName>
        <fullName evidence="2">Lymphoid cell activation antigen</fullName>
    </alternativeName>
    <alternativeName>
        <fullName evidence="3">Nucleoside triphosphate diphosphohydrolase 1</fullName>
        <shortName evidence="3">NTPDase1</shortName>
    </alternativeName>
    <cdAntigenName evidence="8">CD39</cdAntigenName>
    <component>
        <recommendedName>
            <fullName evidence="10">Ectonucleoside triphosphate diphosphohydrolase 1 27 kDa subunit</fullName>
        </recommendedName>
    </component>
    <component>
        <recommendedName>
            <fullName evidence="10">Ectonucleoside triphosphate diphosphohydrolase 1 54 kDa subunit</fullName>
        </recommendedName>
    </component>
</protein>
<accession>Q9MYU4</accession>
<dbReference type="EC" id="3.6.1.5" evidence="5"/>
<dbReference type="EMBL" id="AJ133746">
    <property type="protein sequence ID" value="CAB95871.1"/>
    <property type="molecule type" value="mRNA"/>
</dbReference>
<dbReference type="RefSeq" id="NP_999318.1">
    <property type="nucleotide sequence ID" value="NM_214153.1"/>
</dbReference>
<dbReference type="SMR" id="Q9MYU4"/>
<dbReference type="FunCoup" id="Q9MYU4">
    <property type="interactions" value="72"/>
</dbReference>
<dbReference type="STRING" id="9823.ENSSSCP00000011184"/>
<dbReference type="GlyCosmos" id="Q9MYU4">
    <property type="glycosylation" value="7 sites, No reported glycans"/>
</dbReference>
<dbReference type="GlyGen" id="Q9MYU4">
    <property type="glycosylation" value="7 sites"/>
</dbReference>
<dbReference type="PaxDb" id="9823-ENSSSCP00000011184"/>
<dbReference type="PeptideAtlas" id="Q9MYU4"/>
<dbReference type="GeneID" id="397298"/>
<dbReference type="KEGG" id="ssc:397298"/>
<dbReference type="CTD" id="953"/>
<dbReference type="eggNOG" id="KOG1386">
    <property type="taxonomic scope" value="Eukaryota"/>
</dbReference>
<dbReference type="InParanoid" id="Q9MYU4"/>
<dbReference type="OrthoDB" id="6372431at2759"/>
<dbReference type="BRENDA" id="3.6.1.5">
    <property type="organism ID" value="6170"/>
</dbReference>
<dbReference type="SABIO-RK" id="Q9MYU4"/>
<dbReference type="ChiTaRS" id="ENTPD1">
    <property type="organism name" value="pig"/>
</dbReference>
<dbReference type="Proteomes" id="UP000008227">
    <property type="component" value="Unplaced"/>
</dbReference>
<dbReference type="Proteomes" id="UP000314985">
    <property type="component" value="Unplaced"/>
</dbReference>
<dbReference type="Proteomes" id="UP000694570">
    <property type="component" value="Unplaced"/>
</dbReference>
<dbReference type="Proteomes" id="UP000694571">
    <property type="component" value="Unplaced"/>
</dbReference>
<dbReference type="Proteomes" id="UP000694720">
    <property type="component" value="Unplaced"/>
</dbReference>
<dbReference type="Proteomes" id="UP000694722">
    <property type="component" value="Unplaced"/>
</dbReference>
<dbReference type="Proteomes" id="UP000694723">
    <property type="component" value="Unplaced"/>
</dbReference>
<dbReference type="Proteomes" id="UP000694724">
    <property type="component" value="Unplaced"/>
</dbReference>
<dbReference type="Proteomes" id="UP000694725">
    <property type="component" value="Unplaced"/>
</dbReference>
<dbReference type="Proteomes" id="UP000694726">
    <property type="component" value="Unplaced"/>
</dbReference>
<dbReference type="Proteomes" id="UP000694727">
    <property type="component" value="Unplaced"/>
</dbReference>
<dbReference type="Proteomes" id="UP000694728">
    <property type="component" value="Unplaced"/>
</dbReference>
<dbReference type="GO" id="GO:0005901">
    <property type="term" value="C:caveola"/>
    <property type="evidence" value="ECO:0000250"/>
    <property type="project" value="UniProtKB"/>
</dbReference>
<dbReference type="GO" id="GO:0005886">
    <property type="term" value="C:plasma membrane"/>
    <property type="evidence" value="ECO:0000250"/>
    <property type="project" value="UniProtKB"/>
</dbReference>
<dbReference type="GO" id="GO:0043262">
    <property type="term" value="F:ADP phosphatase activity"/>
    <property type="evidence" value="ECO:0007669"/>
    <property type="project" value="RHEA"/>
</dbReference>
<dbReference type="GO" id="GO:0004050">
    <property type="term" value="F:apyrase activity"/>
    <property type="evidence" value="ECO:0007669"/>
    <property type="project" value="UniProtKB-EC"/>
</dbReference>
<dbReference type="GO" id="GO:0005524">
    <property type="term" value="F:ATP binding"/>
    <property type="evidence" value="ECO:0007669"/>
    <property type="project" value="UniProtKB-KW"/>
</dbReference>
<dbReference type="GO" id="GO:0016887">
    <property type="term" value="F:ATP hydrolysis activity"/>
    <property type="evidence" value="ECO:0007669"/>
    <property type="project" value="RHEA"/>
</dbReference>
<dbReference type="GO" id="GO:0036384">
    <property type="term" value="F:CDP phosphatase activity"/>
    <property type="evidence" value="ECO:0007669"/>
    <property type="project" value="RHEA"/>
</dbReference>
<dbReference type="GO" id="GO:0043273">
    <property type="term" value="F:CTPase activity"/>
    <property type="evidence" value="ECO:0007669"/>
    <property type="project" value="RHEA"/>
</dbReference>
<dbReference type="GO" id="GO:0004382">
    <property type="term" value="F:GDP phosphatase activity"/>
    <property type="evidence" value="ECO:0000318"/>
    <property type="project" value="GO_Central"/>
</dbReference>
<dbReference type="GO" id="GO:0003924">
    <property type="term" value="F:GTPase activity"/>
    <property type="evidence" value="ECO:0007669"/>
    <property type="project" value="RHEA"/>
</dbReference>
<dbReference type="GO" id="GO:1990003">
    <property type="term" value="F:IDP phosphatase activity"/>
    <property type="evidence" value="ECO:0007669"/>
    <property type="project" value="RHEA"/>
</dbReference>
<dbReference type="GO" id="GO:0103023">
    <property type="term" value="F:ITPase activity"/>
    <property type="evidence" value="ECO:0007669"/>
    <property type="project" value="RHEA"/>
</dbReference>
<dbReference type="GO" id="GO:0017110">
    <property type="term" value="F:nucleoside diphosphate phosphatase activity"/>
    <property type="evidence" value="ECO:0000314"/>
    <property type="project" value="UniProtKB"/>
</dbReference>
<dbReference type="GO" id="GO:0016616">
    <property type="term" value="F:oxidoreductase activity, acting on the CH-OH group of donors, NAD or NADP as acceptor"/>
    <property type="evidence" value="ECO:0007669"/>
    <property type="project" value="InterPro"/>
</dbReference>
<dbReference type="GO" id="GO:0017111">
    <property type="term" value="F:ribonucleoside triphosphate phosphatase activity"/>
    <property type="evidence" value="ECO:0000314"/>
    <property type="project" value="UniProtKB"/>
</dbReference>
<dbReference type="GO" id="GO:0045134">
    <property type="term" value="F:UDP phosphatase activity"/>
    <property type="evidence" value="ECO:0000318"/>
    <property type="project" value="GO_Central"/>
</dbReference>
<dbReference type="GO" id="GO:0009134">
    <property type="term" value="P:nucleoside diphosphate catabolic process"/>
    <property type="evidence" value="ECO:0000318"/>
    <property type="project" value="GO_Central"/>
</dbReference>
<dbReference type="GO" id="GO:0070527">
    <property type="term" value="P:platelet aggregation"/>
    <property type="evidence" value="ECO:0000315"/>
    <property type="project" value="UniProtKB"/>
</dbReference>
<dbReference type="FunFam" id="3.30.420.150:FF:000002">
    <property type="entry name" value="Ectonucleoside triphosphate diphosphohydrolase 1"/>
    <property type="match status" value="1"/>
</dbReference>
<dbReference type="FunFam" id="3.30.420.40:FF:000068">
    <property type="entry name" value="Ectonucleoside triphosphate diphosphohydrolase 1"/>
    <property type="match status" value="1"/>
</dbReference>
<dbReference type="Gene3D" id="3.30.420.40">
    <property type="match status" value="1"/>
</dbReference>
<dbReference type="Gene3D" id="3.30.420.150">
    <property type="entry name" value="Exopolyphosphatase. Domain 2"/>
    <property type="match status" value="1"/>
</dbReference>
<dbReference type="InterPro" id="IPR000407">
    <property type="entry name" value="GDA1_CD39_NTPase"/>
</dbReference>
<dbReference type="InterPro" id="IPR015955">
    <property type="entry name" value="Lactate_DH/Glyco_Ohase_4_C"/>
</dbReference>
<dbReference type="PANTHER" id="PTHR11782">
    <property type="entry name" value="ADENOSINE/GUANOSINE DIPHOSPHATASE"/>
    <property type="match status" value="1"/>
</dbReference>
<dbReference type="PANTHER" id="PTHR11782:SF32">
    <property type="entry name" value="ECTONUCLEOSIDE TRIPHOSPHATE DIPHOSPHOHYDROLASE 1"/>
    <property type="match status" value="1"/>
</dbReference>
<dbReference type="Pfam" id="PF01150">
    <property type="entry name" value="GDA1_CD39"/>
    <property type="match status" value="1"/>
</dbReference>
<dbReference type="SUPFAM" id="SSF56327">
    <property type="entry name" value="LDH C-terminal domain-like"/>
    <property type="match status" value="1"/>
</dbReference>
<dbReference type="PROSITE" id="PS01238">
    <property type="entry name" value="GDA1_CD39_NTPASE"/>
    <property type="match status" value="1"/>
</dbReference>
<proteinExistence type="evidence at protein level"/>
<gene>
    <name evidence="2" type="primary">ENTPD1</name>
    <name evidence="8" type="synonym">CD39</name>
</gene>
<comment type="function">
    <text evidence="5 7">Catalyzes the hydrolysis of both di- and triphosphate nucleotides (NDPs and NTPs) and hydrolyze NTPs to nucleotide monophosphates (NMPs) in two distinct successive phosphate-releasing steps, with NDPs as intermediates and participates in the regulation of extracellular levels of nucleotides (PubMed:10866813, PubMed:8996251). By hydrolyzing proinflammatory ATP and platelet-activating ADP to AMP, it blocks platelet aggregation and supports blood flow (PubMed:8996251).</text>
</comment>
<comment type="catalytic activity">
    <reaction evidence="5">
        <text>a ribonucleoside 5'-triphosphate + 2 H2O = a ribonucleoside 5'-phosphate + 2 phosphate + 2 H(+)</text>
        <dbReference type="Rhea" id="RHEA:36795"/>
        <dbReference type="ChEBI" id="CHEBI:15377"/>
        <dbReference type="ChEBI" id="CHEBI:15378"/>
        <dbReference type="ChEBI" id="CHEBI:43474"/>
        <dbReference type="ChEBI" id="CHEBI:58043"/>
        <dbReference type="ChEBI" id="CHEBI:61557"/>
        <dbReference type="EC" id="3.6.1.5"/>
    </reaction>
    <physiologicalReaction direction="left-to-right" evidence="5">
        <dbReference type="Rhea" id="RHEA:36796"/>
    </physiologicalReaction>
</comment>
<comment type="catalytic activity">
    <reaction evidence="5">
        <text>a ribonucleoside 5'-triphosphate + H2O = a ribonucleoside 5'-diphosphate + phosphate + H(+)</text>
        <dbReference type="Rhea" id="RHEA:23680"/>
        <dbReference type="ChEBI" id="CHEBI:15377"/>
        <dbReference type="ChEBI" id="CHEBI:15378"/>
        <dbReference type="ChEBI" id="CHEBI:43474"/>
        <dbReference type="ChEBI" id="CHEBI:57930"/>
        <dbReference type="ChEBI" id="CHEBI:61557"/>
    </reaction>
    <physiologicalReaction direction="left-to-right" evidence="5">
        <dbReference type="Rhea" id="RHEA:23681"/>
    </physiologicalReaction>
</comment>
<comment type="catalytic activity">
    <reaction evidence="5 7">
        <text>a ribonucleoside 5'-diphosphate + H2O = a ribonucleoside 5'-phosphate + phosphate + H(+)</text>
        <dbReference type="Rhea" id="RHEA:36799"/>
        <dbReference type="ChEBI" id="CHEBI:15377"/>
        <dbReference type="ChEBI" id="CHEBI:15378"/>
        <dbReference type="ChEBI" id="CHEBI:43474"/>
        <dbReference type="ChEBI" id="CHEBI:57930"/>
        <dbReference type="ChEBI" id="CHEBI:58043"/>
    </reaction>
    <physiologicalReaction direction="left-to-right" evidence="5 7">
        <dbReference type="Rhea" id="RHEA:36800"/>
    </physiologicalReaction>
</comment>
<comment type="catalytic activity">
    <reaction evidence="5">
        <text>ATP + 2 H2O = AMP + 2 phosphate + 2 H(+)</text>
        <dbReference type="Rhea" id="RHEA:20988"/>
        <dbReference type="ChEBI" id="CHEBI:15377"/>
        <dbReference type="ChEBI" id="CHEBI:15378"/>
        <dbReference type="ChEBI" id="CHEBI:30616"/>
        <dbReference type="ChEBI" id="CHEBI:43474"/>
        <dbReference type="ChEBI" id="CHEBI:456215"/>
    </reaction>
    <physiologicalReaction direction="left-to-right" evidence="5">
        <dbReference type="Rhea" id="RHEA:20989"/>
    </physiologicalReaction>
</comment>
<comment type="catalytic activity">
    <reaction evidence="5">
        <text>ATP + H2O = ADP + phosphate + H(+)</text>
        <dbReference type="Rhea" id="RHEA:13065"/>
        <dbReference type="ChEBI" id="CHEBI:15377"/>
        <dbReference type="ChEBI" id="CHEBI:15378"/>
        <dbReference type="ChEBI" id="CHEBI:30616"/>
        <dbReference type="ChEBI" id="CHEBI:43474"/>
        <dbReference type="ChEBI" id="CHEBI:456216"/>
    </reaction>
    <physiologicalReaction direction="left-to-right" evidence="5">
        <dbReference type="Rhea" id="RHEA:13066"/>
    </physiologicalReaction>
</comment>
<comment type="catalytic activity">
    <reaction evidence="5 7">
        <text>ADP + H2O = AMP + phosphate + H(+)</text>
        <dbReference type="Rhea" id="RHEA:61436"/>
        <dbReference type="ChEBI" id="CHEBI:15377"/>
        <dbReference type="ChEBI" id="CHEBI:15378"/>
        <dbReference type="ChEBI" id="CHEBI:43474"/>
        <dbReference type="ChEBI" id="CHEBI:456215"/>
        <dbReference type="ChEBI" id="CHEBI:456216"/>
    </reaction>
    <physiologicalReaction direction="left-to-right" evidence="5 7">
        <dbReference type="Rhea" id="RHEA:61437"/>
    </physiologicalReaction>
</comment>
<comment type="catalytic activity">
    <reaction evidence="2">
        <text>CTP + 2 H2O = CMP + 2 phosphate + 2 H(+)</text>
        <dbReference type="Rhea" id="RHEA:64908"/>
        <dbReference type="ChEBI" id="CHEBI:15377"/>
        <dbReference type="ChEBI" id="CHEBI:15378"/>
        <dbReference type="ChEBI" id="CHEBI:37563"/>
        <dbReference type="ChEBI" id="CHEBI:43474"/>
        <dbReference type="ChEBI" id="CHEBI:60377"/>
    </reaction>
    <physiologicalReaction direction="left-to-right" evidence="2">
        <dbReference type="Rhea" id="RHEA:64909"/>
    </physiologicalReaction>
</comment>
<comment type="catalytic activity">
    <reaction evidence="2">
        <text>CTP + H2O = CDP + phosphate + H(+)</text>
        <dbReference type="Rhea" id="RHEA:29387"/>
        <dbReference type="ChEBI" id="CHEBI:15377"/>
        <dbReference type="ChEBI" id="CHEBI:15378"/>
        <dbReference type="ChEBI" id="CHEBI:37563"/>
        <dbReference type="ChEBI" id="CHEBI:43474"/>
        <dbReference type="ChEBI" id="CHEBI:58069"/>
    </reaction>
    <physiologicalReaction direction="left-to-right" evidence="2">
        <dbReference type="Rhea" id="RHEA:29388"/>
    </physiologicalReaction>
</comment>
<comment type="catalytic activity">
    <reaction evidence="2">
        <text>CDP + H2O = CMP + phosphate + H(+)</text>
        <dbReference type="Rhea" id="RHEA:64880"/>
        <dbReference type="ChEBI" id="CHEBI:15377"/>
        <dbReference type="ChEBI" id="CHEBI:15378"/>
        <dbReference type="ChEBI" id="CHEBI:43474"/>
        <dbReference type="ChEBI" id="CHEBI:58069"/>
        <dbReference type="ChEBI" id="CHEBI:60377"/>
    </reaction>
    <physiologicalReaction direction="left-to-right" evidence="2">
        <dbReference type="Rhea" id="RHEA:64881"/>
    </physiologicalReaction>
</comment>
<comment type="catalytic activity">
    <reaction evidence="2">
        <text>GTP + 2 H2O = GMP + 2 phosphate + 2 H(+)</text>
        <dbReference type="Rhea" id="RHEA:64904"/>
        <dbReference type="ChEBI" id="CHEBI:15377"/>
        <dbReference type="ChEBI" id="CHEBI:15378"/>
        <dbReference type="ChEBI" id="CHEBI:37565"/>
        <dbReference type="ChEBI" id="CHEBI:43474"/>
        <dbReference type="ChEBI" id="CHEBI:58115"/>
    </reaction>
    <physiologicalReaction direction="left-to-right" evidence="2">
        <dbReference type="Rhea" id="RHEA:64905"/>
    </physiologicalReaction>
</comment>
<comment type="catalytic activity">
    <reaction evidence="2">
        <text>GTP + H2O = GDP + phosphate + H(+)</text>
        <dbReference type="Rhea" id="RHEA:19669"/>
        <dbReference type="ChEBI" id="CHEBI:15377"/>
        <dbReference type="ChEBI" id="CHEBI:15378"/>
        <dbReference type="ChEBI" id="CHEBI:37565"/>
        <dbReference type="ChEBI" id="CHEBI:43474"/>
        <dbReference type="ChEBI" id="CHEBI:58189"/>
    </reaction>
    <physiologicalReaction direction="left-to-right" evidence="2">
        <dbReference type="Rhea" id="RHEA:19670"/>
    </physiologicalReaction>
</comment>
<comment type="catalytic activity">
    <reaction evidence="2">
        <text>GDP + H2O = GMP + phosphate + H(+)</text>
        <dbReference type="Rhea" id="RHEA:22156"/>
        <dbReference type="ChEBI" id="CHEBI:15377"/>
        <dbReference type="ChEBI" id="CHEBI:15378"/>
        <dbReference type="ChEBI" id="CHEBI:43474"/>
        <dbReference type="ChEBI" id="CHEBI:58115"/>
        <dbReference type="ChEBI" id="CHEBI:58189"/>
    </reaction>
    <physiologicalReaction direction="left-to-right" evidence="2">
        <dbReference type="Rhea" id="RHEA:22157"/>
    </physiologicalReaction>
</comment>
<comment type="catalytic activity">
    <reaction evidence="2">
        <text>ITP + 2 H2O = IMP + 2 phosphate + 2 H(+)</text>
        <dbReference type="Rhea" id="RHEA:77735"/>
        <dbReference type="ChEBI" id="CHEBI:15377"/>
        <dbReference type="ChEBI" id="CHEBI:15378"/>
        <dbReference type="ChEBI" id="CHEBI:43474"/>
        <dbReference type="ChEBI" id="CHEBI:58053"/>
        <dbReference type="ChEBI" id="CHEBI:61402"/>
    </reaction>
    <physiologicalReaction direction="left-to-right" evidence="2">
        <dbReference type="Rhea" id="RHEA:77736"/>
    </physiologicalReaction>
</comment>
<comment type="catalytic activity">
    <reaction evidence="2">
        <text>ITP + H2O = IDP + phosphate + H(+)</text>
        <dbReference type="Rhea" id="RHEA:28330"/>
        <dbReference type="ChEBI" id="CHEBI:15377"/>
        <dbReference type="ChEBI" id="CHEBI:15378"/>
        <dbReference type="ChEBI" id="CHEBI:43474"/>
        <dbReference type="ChEBI" id="CHEBI:58280"/>
        <dbReference type="ChEBI" id="CHEBI:61402"/>
    </reaction>
    <physiologicalReaction direction="left-to-right" evidence="2">
        <dbReference type="Rhea" id="RHEA:28331"/>
    </physiologicalReaction>
</comment>
<comment type="catalytic activity">
    <reaction evidence="2">
        <text>IDP + H2O = IMP + phosphate + H(+)</text>
        <dbReference type="Rhea" id="RHEA:35207"/>
        <dbReference type="ChEBI" id="CHEBI:15377"/>
        <dbReference type="ChEBI" id="CHEBI:15378"/>
        <dbReference type="ChEBI" id="CHEBI:43474"/>
        <dbReference type="ChEBI" id="CHEBI:58053"/>
        <dbReference type="ChEBI" id="CHEBI:58280"/>
    </reaction>
    <physiologicalReaction direction="left-to-right" evidence="2">
        <dbReference type="Rhea" id="RHEA:35208"/>
    </physiologicalReaction>
</comment>
<comment type="catalytic activity">
    <reaction evidence="3">
        <text>UTP + 2 H2O = UMP + 2 phosphate + 2 H(+)</text>
        <dbReference type="Rhea" id="RHEA:64896"/>
        <dbReference type="ChEBI" id="CHEBI:15377"/>
        <dbReference type="ChEBI" id="CHEBI:15378"/>
        <dbReference type="ChEBI" id="CHEBI:43474"/>
        <dbReference type="ChEBI" id="CHEBI:46398"/>
        <dbReference type="ChEBI" id="CHEBI:57865"/>
    </reaction>
    <physiologicalReaction direction="left-to-right" evidence="3">
        <dbReference type="Rhea" id="RHEA:64897"/>
    </physiologicalReaction>
</comment>
<comment type="catalytic activity">
    <reaction evidence="3">
        <text>UTP + H2O = UDP + phosphate + H(+)</text>
        <dbReference type="Rhea" id="RHEA:64900"/>
        <dbReference type="ChEBI" id="CHEBI:15377"/>
        <dbReference type="ChEBI" id="CHEBI:15378"/>
        <dbReference type="ChEBI" id="CHEBI:43474"/>
        <dbReference type="ChEBI" id="CHEBI:46398"/>
        <dbReference type="ChEBI" id="CHEBI:58223"/>
    </reaction>
    <physiologicalReaction direction="left-to-right" evidence="3">
        <dbReference type="Rhea" id="RHEA:64901"/>
    </physiologicalReaction>
</comment>
<comment type="catalytic activity">
    <reaction evidence="3">
        <text>UDP + H2O = UMP + phosphate + H(+)</text>
        <dbReference type="Rhea" id="RHEA:64876"/>
        <dbReference type="ChEBI" id="CHEBI:15377"/>
        <dbReference type="ChEBI" id="CHEBI:15378"/>
        <dbReference type="ChEBI" id="CHEBI:43474"/>
        <dbReference type="ChEBI" id="CHEBI:57865"/>
        <dbReference type="ChEBI" id="CHEBI:58223"/>
    </reaction>
    <physiologicalReaction direction="left-to-right" evidence="3">
        <dbReference type="Rhea" id="RHEA:64877"/>
    </physiologicalReaction>
</comment>
<comment type="cofactor">
    <cofactor evidence="2">
        <name>Ca(2+)</name>
        <dbReference type="ChEBI" id="CHEBI:29108"/>
    </cofactor>
    <cofactor evidence="2">
        <name>Mg(2+)</name>
        <dbReference type="ChEBI" id="CHEBI:18420"/>
    </cofactor>
</comment>
<comment type="activity regulation">
    <text evidence="7">The ATP diphosphohydrolase activity is decreased by half by sodium azide.</text>
</comment>
<comment type="subunit">
    <text evidence="10">Homodimer; disulfide-linked.</text>
</comment>
<comment type="subcellular location">
    <subcellularLocation>
        <location evidence="2">Membrane</location>
        <topology evidence="2">Multi-pass membrane protein</topology>
    </subcellularLocation>
    <subcellularLocation>
        <location evidence="2">Membrane</location>
        <location evidence="2">Caveola</location>
    </subcellularLocation>
</comment>
<comment type="tissue specificity">
    <text evidence="5">Highest expression found in vascular endothelium, smooth muscle, spleen and lung (at protein level) (PubMed:10866813). High expression also found in stomach, duodenum, kidney, lymph node and aorta (at protein level) (PubMed:10866813).</text>
</comment>
<comment type="PTM">
    <text evidence="10">N-glycosylated.</text>
</comment>
<comment type="PTM">
    <text evidence="5">Cleaved into two polypeptides that seem to stay together by non-covalent interactions.</text>
</comment>
<comment type="PTM">
    <text evidence="2">The N-terminus is blocked.</text>
</comment>
<comment type="PTM">
    <text evidence="2">Palmitoylated on Cys-13; which is required for caveola targeting.</text>
</comment>
<comment type="similarity">
    <text evidence="9">Belongs to the GDA1/CD39 NTPase family.</text>
</comment>
<name>ENTP1_PIG</name>
<reference key="1">
    <citation type="journal article" date="2000" name="Eur. J. Biochem.">
        <title>Distribution, cloning, and characterization of porcine nucleoside triphosphate diphosphohydrolase-1.</title>
        <authorList>
            <person name="Lemmens R."/>
            <person name="Vanduffel L."/>
            <person name="Kittel A."/>
            <person name="Beaudoin A.R."/>
            <person name="Benrezzak O."/>
            <person name="Sevigny J."/>
        </authorList>
    </citation>
    <scope>NUCLEOTIDE SEQUENCE [MRNA]</scope>
    <scope>TISSUE SPECIFICITY</scope>
    <scope>GLYCOSYLATION</scope>
    <scope>SUBUNIT</scope>
    <scope>FUNCTION</scope>
    <scope>CATALYTIC ACTIVITY</scope>
    <scope>PTM</scope>
    <source>
        <tissue>Aortic endothelium</tissue>
    </source>
</reference>
<reference key="2">
    <citation type="journal article" date="1996" name="J. Biol. Chem.">
        <title>Identification and characterization of CD39/vascular ATP diphosphohydrolase.</title>
        <authorList>
            <person name="Kaczmarek E."/>
            <person name="Koziak K."/>
            <person name="Sevigny J."/>
            <person name="Siegel J.B."/>
            <person name="Anrather J."/>
            <person name="Beaudoin A.R."/>
            <person name="Bach F.H."/>
            <person name="Robson S.C."/>
        </authorList>
    </citation>
    <scope>PROTEIN SEQUENCE OF 202-220</scope>
    <source>
        <tissue>Pancreas</tissue>
    </source>
</reference>
<reference key="3">
    <citation type="journal article" date="1997" name="J. Exp. Med.">
        <title>Loss of ATP diphosphohydrolase activity with endothelial cell activation.</title>
        <authorList>
            <person name="Robson S.C."/>
            <person name="Kaczmarek E."/>
            <person name="Siegel J.B."/>
            <person name="Candinas D."/>
            <person name="Koziak K."/>
            <person name="Millan M."/>
            <person name="Hancock W.W."/>
            <person name="Bach F.H."/>
        </authorList>
    </citation>
    <scope>FUNCTION</scope>
    <scope>CATALYTIC ACTIVITY</scope>
    <scope>ACTIVITY REGULATION</scope>
    <source>
        <tissue>Umbilical vein</tissue>
    </source>
</reference>
<keyword id="KW-0067">ATP-binding</keyword>
<keyword id="KW-0106">Calcium</keyword>
<keyword id="KW-0903">Direct protein sequencing</keyword>
<keyword id="KW-1015">Disulfide bond</keyword>
<keyword id="KW-0325">Glycoprotein</keyword>
<keyword id="KW-0378">Hydrolase</keyword>
<keyword id="KW-0460">Magnesium</keyword>
<keyword id="KW-0472">Membrane</keyword>
<keyword id="KW-0547">Nucleotide-binding</keyword>
<keyword id="KW-1185">Reference proteome</keyword>
<keyword id="KW-0812">Transmembrane</keyword>
<keyword id="KW-1133">Transmembrane helix</keyword>
<sequence length="510" mass="57757">MEDRRESELKTFCSKNILVILGFSSIIAVIALLALGLTQNKPLPENVKFGIVLDAGSSHTSLYIYKWPAEKENDTGVVSQVEECKLKGPGISEFAKKLGEIDIYLEACMERARTVVPKSQHAETPVYLGATAGMRLLRMKNENLASKILSTVAESITRYPFDFQGARIITGQEEGAYGWITINYLLDKFIQKSGWFNLKPRKGDTQETYGALDLGGASTQITFVPQNQVLESPENTLHFRLYGKNYSVYTHSFLCYGKDQALLQKLTKDLKNTNGTIHEPCFHSGYQRRMNVSHLYEAPCTRRFLTSLPFPELEIQGTGDFQKCQQSIRPLFNTSYCPYSRCSFDGVFLPLPQGDFAAFSAFYYVMGFLNLTSEEGSFQSKVTSTLEAFCSRPWAELQMYFGDVKEKYLSEYCFSGTYILTLLLSGYHFTAETWKNIHFMGKVQSTSVGWTLGYMLNLTNMIPSEEPSSTRLSHSTYVFLMVLFSLILVIVVIIGLFVCHRPSYFWKDMV</sequence>
<organism>
    <name type="scientific">Sus scrofa</name>
    <name type="common">Pig</name>
    <dbReference type="NCBI Taxonomy" id="9823"/>
    <lineage>
        <taxon>Eukaryota</taxon>
        <taxon>Metazoa</taxon>
        <taxon>Chordata</taxon>
        <taxon>Craniata</taxon>
        <taxon>Vertebrata</taxon>
        <taxon>Euteleostomi</taxon>
        <taxon>Mammalia</taxon>
        <taxon>Eutheria</taxon>
        <taxon>Laurasiatheria</taxon>
        <taxon>Artiodactyla</taxon>
        <taxon>Suina</taxon>
        <taxon>Suidae</taxon>
        <taxon>Sus</taxon>
    </lineage>
</organism>
<feature type="chain" id="PRO_0000019905" description="Ectonucleoside triphosphate diphosphohydrolase 1">
    <location>
        <begin position="1"/>
        <end position="510"/>
    </location>
</feature>
<feature type="chain" id="PRO_0000019906" description="Ectonucleoside triphosphate diphosphohydrolase 1 27 kDa subunit">
    <location>
        <begin position="1"/>
        <end position="201"/>
    </location>
</feature>
<feature type="chain" id="PRO_0000019907" description="Ectonucleoside triphosphate diphosphohydrolase 1 54 kDa subunit" evidence="6">
    <location>
        <begin position="202"/>
        <end position="510"/>
    </location>
</feature>
<feature type="topological domain" description="Cytoplasmic" evidence="4">
    <location>
        <begin position="1"/>
        <end position="16"/>
    </location>
</feature>
<feature type="transmembrane region" description="Helical" evidence="4">
    <location>
        <begin position="17"/>
        <end position="37"/>
    </location>
</feature>
<feature type="topological domain" description="Extracellular" evidence="4">
    <location>
        <begin position="38"/>
        <end position="477"/>
    </location>
</feature>
<feature type="transmembrane region" description="Helical" evidence="4">
    <location>
        <begin position="478"/>
        <end position="498"/>
    </location>
</feature>
<feature type="topological domain" description="Cytoplasmic" evidence="4">
    <location>
        <begin position="499"/>
        <end position="510"/>
    </location>
</feature>
<feature type="active site" description="Proton acceptor" evidence="1">
    <location>
        <position position="174"/>
    </location>
</feature>
<feature type="glycosylation site" description="N-linked (GlcNAc...) asparagine" evidence="4">
    <location>
        <position position="73"/>
    </location>
</feature>
<feature type="glycosylation site" description="N-linked (GlcNAc...) asparagine" evidence="4">
    <location>
        <position position="245"/>
    </location>
</feature>
<feature type="glycosylation site" description="N-linked (GlcNAc...) asparagine" evidence="4">
    <location>
        <position position="274"/>
    </location>
</feature>
<feature type="glycosylation site" description="N-linked (GlcNAc...) asparagine" evidence="4">
    <location>
        <position position="291"/>
    </location>
</feature>
<feature type="glycosylation site" description="N-linked (GlcNAc...) asparagine" evidence="4">
    <location>
        <position position="333"/>
    </location>
</feature>
<feature type="glycosylation site" description="N-linked (GlcNAc...) asparagine" evidence="4">
    <location>
        <position position="370"/>
    </location>
</feature>
<feature type="glycosylation site" description="N-linked (GlcNAc...) asparagine" evidence="4">
    <location>
        <position position="457"/>
    </location>
</feature>
<feature type="disulfide bond" evidence="3">
    <location>
        <begin position="84"/>
        <end position="108"/>
    </location>
</feature>
<feature type="disulfide bond" evidence="3">
    <location>
        <begin position="255"/>
        <end position="300"/>
    </location>
</feature>
<feature type="disulfide bond" evidence="3">
    <location>
        <begin position="281"/>
        <end position="324"/>
    </location>
</feature>
<feature type="disulfide bond" evidence="3">
    <location>
        <begin position="337"/>
        <end position="342"/>
    </location>
</feature>
<feature type="disulfide bond" evidence="3">
    <location>
        <begin position="390"/>
        <end position="413"/>
    </location>
</feature>
<feature type="sequence conflict" description="In Ref. 2; AA sequence." evidence="9" ref="2">
    <original>G</original>
    <variation>S</variation>
    <location>
        <position position="203"/>
    </location>
</feature>